<evidence type="ECO:0000255" key="1">
    <source>
        <dbReference type="HAMAP-Rule" id="MF_00117"/>
    </source>
</evidence>
<sequence length="290" mass="31663">MDKIIKTISESGAFRAFVLDSTETVRTAQEKHQTQASSTVALGRTLIASQILAANEKGNTKLTVKVLGSSSLGAIITVADTKGNVKGYVQNPGVDIKKTATGEVLVGPFVGNGQFLVITDYGTGNPYNSITPLISGEIGEDLAFYLTESQQTPSAVGLNVLLDEEDKVKVAGGFLVQVLPGAKKEEIARFEKRIQEMPAISTLLESDDHIEALLKAIYGDEAYKRLSEEEIRFQCDCSHERFMNALASLPSSDLQEMKEEDHGAEITCQFCQTTYNFDEKDLEELIRDKS</sequence>
<proteinExistence type="inferred from homology"/>
<protein>
    <recommendedName>
        <fullName evidence="1">33 kDa chaperonin</fullName>
    </recommendedName>
    <alternativeName>
        <fullName evidence="1">Heat shock protein 33 homolog</fullName>
        <shortName evidence="1">HSP33</shortName>
    </alternativeName>
</protein>
<organism>
    <name type="scientific">Streptococcus pneumoniae (strain ATCC 700669 / Spain 23F-1)</name>
    <dbReference type="NCBI Taxonomy" id="561276"/>
    <lineage>
        <taxon>Bacteria</taxon>
        <taxon>Bacillati</taxon>
        <taxon>Bacillota</taxon>
        <taxon>Bacilli</taxon>
        <taxon>Lactobacillales</taxon>
        <taxon>Streptococcaceae</taxon>
        <taxon>Streptococcus</taxon>
    </lineage>
</organism>
<gene>
    <name evidence="1" type="primary">hslO</name>
    <name type="ordered locus">SPN23F22220</name>
</gene>
<keyword id="KW-0143">Chaperone</keyword>
<keyword id="KW-0963">Cytoplasm</keyword>
<keyword id="KW-1015">Disulfide bond</keyword>
<keyword id="KW-0676">Redox-active center</keyword>
<keyword id="KW-0346">Stress response</keyword>
<keyword id="KW-0862">Zinc</keyword>
<comment type="function">
    <text evidence="1">Redox regulated molecular chaperone. Protects both thermally unfolding and oxidatively damaged proteins from irreversible aggregation. Plays an important role in the bacterial defense system toward oxidative stress.</text>
</comment>
<comment type="subcellular location">
    <subcellularLocation>
        <location evidence="1">Cytoplasm</location>
    </subcellularLocation>
</comment>
<comment type="PTM">
    <text evidence="1">Under oxidizing conditions two disulfide bonds are formed involving the reactive cysteines. Under reducing conditions zinc is bound to the reactive cysteines and the protein is inactive.</text>
</comment>
<comment type="similarity">
    <text evidence="1">Belongs to the HSP33 family.</text>
</comment>
<feature type="chain" id="PRO_1000119266" description="33 kDa chaperonin">
    <location>
        <begin position="1"/>
        <end position="290"/>
    </location>
</feature>
<feature type="disulfide bond" description="Redox-active" evidence="1">
    <location>
        <begin position="235"/>
        <end position="237"/>
    </location>
</feature>
<feature type="disulfide bond" description="Redox-active" evidence="1">
    <location>
        <begin position="268"/>
        <end position="271"/>
    </location>
</feature>
<reference key="1">
    <citation type="journal article" date="2009" name="J. Bacteriol.">
        <title>Role of conjugative elements in the evolution of the multidrug-resistant pandemic clone Streptococcus pneumoniae Spain23F ST81.</title>
        <authorList>
            <person name="Croucher N.J."/>
            <person name="Walker D."/>
            <person name="Romero P."/>
            <person name="Lennard N."/>
            <person name="Paterson G.K."/>
            <person name="Bason N.C."/>
            <person name="Mitchell A.M."/>
            <person name="Quail M.A."/>
            <person name="Andrew P.W."/>
            <person name="Parkhill J."/>
            <person name="Bentley S.D."/>
            <person name="Mitchell T.J."/>
        </authorList>
    </citation>
    <scope>NUCLEOTIDE SEQUENCE [LARGE SCALE GENOMIC DNA]</scope>
    <source>
        <strain>ATCC 700669 / Spain 23F-1</strain>
    </source>
</reference>
<dbReference type="EMBL" id="FM211187">
    <property type="protein sequence ID" value="CAR69951.1"/>
    <property type="molecule type" value="Genomic_DNA"/>
</dbReference>
<dbReference type="RefSeq" id="WP_000357847.1">
    <property type="nucleotide sequence ID" value="NC_011900.1"/>
</dbReference>
<dbReference type="SMR" id="B8ZQ24"/>
<dbReference type="KEGG" id="sne:SPN23F22220"/>
<dbReference type="HOGENOM" id="CLU_054493_1_0_9"/>
<dbReference type="GO" id="GO:0005737">
    <property type="term" value="C:cytoplasm"/>
    <property type="evidence" value="ECO:0007669"/>
    <property type="project" value="UniProtKB-SubCell"/>
</dbReference>
<dbReference type="GO" id="GO:0044183">
    <property type="term" value="F:protein folding chaperone"/>
    <property type="evidence" value="ECO:0007669"/>
    <property type="project" value="TreeGrafter"/>
</dbReference>
<dbReference type="GO" id="GO:0051082">
    <property type="term" value="F:unfolded protein binding"/>
    <property type="evidence" value="ECO:0007669"/>
    <property type="project" value="UniProtKB-UniRule"/>
</dbReference>
<dbReference type="GO" id="GO:0042026">
    <property type="term" value="P:protein refolding"/>
    <property type="evidence" value="ECO:0007669"/>
    <property type="project" value="TreeGrafter"/>
</dbReference>
<dbReference type="CDD" id="cd00498">
    <property type="entry name" value="Hsp33"/>
    <property type="match status" value="1"/>
</dbReference>
<dbReference type="Gene3D" id="3.55.30.10">
    <property type="entry name" value="Hsp33 domain"/>
    <property type="match status" value="1"/>
</dbReference>
<dbReference type="Gene3D" id="3.90.1280.10">
    <property type="entry name" value="HSP33 redox switch-like"/>
    <property type="match status" value="1"/>
</dbReference>
<dbReference type="HAMAP" id="MF_00117">
    <property type="entry name" value="HslO"/>
    <property type="match status" value="1"/>
</dbReference>
<dbReference type="InterPro" id="IPR000397">
    <property type="entry name" value="Heat_shock_Hsp33"/>
</dbReference>
<dbReference type="InterPro" id="IPR016154">
    <property type="entry name" value="Heat_shock_Hsp33_C"/>
</dbReference>
<dbReference type="InterPro" id="IPR016153">
    <property type="entry name" value="Heat_shock_Hsp33_N"/>
</dbReference>
<dbReference type="NCBIfam" id="NF001033">
    <property type="entry name" value="PRK00114.1"/>
    <property type="match status" value="1"/>
</dbReference>
<dbReference type="PANTHER" id="PTHR30111">
    <property type="entry name" value="33 KDA CHAPERONIN"/>
    <property type="match status" value="1"/>
</dbReference>
<dbReference type="PANTHER" id="PTHR30111:SF1">
    <property type="entry name" value="33 KDA CHAPERONIN"/>
    <property type="match status" value="1"/>
</dbReference>
<dbReference type="Pfam" id="PF01430">
    <property type="entry name" value="HSP33"/>
    <property type="match status" value="1"/>
</dbReference>
<dbReference type="PIRSF" id="PIRSF005261">
    <property type="entry name" value="Heat_shock_Hsp33"/>
    <property type="match status" value="1"/>
</dbReference>
<dbReference type="SUPFAM" id="SSF64397">
    <property type="entry name" value="Hsp33 domain"/>
    <property type="match status" value="1"/>
</dbReference>
<dbReference type="SUPFAM" id="SSF118352">
    <property type="entry name" value="HSP33 redox switch-like"/>
    <property type="match status" value="1"/>
</dbReference>
<accession>B8ZQ24</accession>
<name>HSLO_STRPJ</name>